<keyword id="KW-0520">NAD</keyword>
<keyword id="KW-0560">Oxidoreductase</keyword>
<keyword id="KW-1185">Reference proteome</keyword>
<comment type="similarity">
    <text evidence="2">Belongs to the D-isomer specific 2-hydroxyacid dehydrogenase family.</text>
</comment>
<protein>
    <recommendedName>
        <fullName>Putative 2-hydroxyacid dehydrogenase UNK4.10</fullName>
        <ecNumber>1.-.-.-</ecNumber>
    </recommendedName>
</protein>
<proteinExistence type="evidence at transcript level"/>
<feature type="chain" id="PRO_0000076038" description="Putative 2-hydroxyacid dehydrogenase UNK4.10">
    <location>
        <begin position="1"/>
        <end position="334"/>
    </location>
</feature>
<feature type="active site" evidence="1">
    <location>
        <position position="246"/>
    </location>
</feature>
<feature type="active site" evidence="1">
    <location>
        <position position="275"/>
    </location>
</feature>
<feature type="active site" description="Proton donor" evidence="1">
    <location>
        <position position="293"/>
    </location>
</feature>
<feature type="binding site" evidence="1">
    <location>
        <begin position="166"/>
        <end position="167"/>
    </location>
    <ligand>
        <name>NAD(+)</name>
        <dbReference type="ChEBI" id="CHEBI:57540"/>
    </ligand>
</feature>
<feature type="binding site" evidence="1">
    <location>
        <begin position="244"/>
        <end position="246"/>
    </location>
    <ligand>
        <name>NAD(+)</name>
        <dbReference type="ChEBI" id="CHEBI:57540"/>
    </ligand>
</feature>
<feature type="binding site" evidence="1">
    <location>
        <position position="270"/>
    </location>
    <ligand>
        <name>NAD(+)</name>
        <dbReference type="ChEBI" id="CHEBI:57540"/>
    </ligand>
</feature>
<feature type="binding site" evidence="1">
    <location>
        <begin position="293"/>
        <end position="296"/>
    </location>
    <ligand>
        <name>NAD(+)</name>
        <dbReference type="ChEBI" id="CHEBI:57540"/>
    </ligand>
</feature>
<feature type="sequence conflict" description="In Ref. 1; BAA13847." evidence="2" ref="1">
    <original>F</original>
    <variation>W</variation>
    <location>
        <position position="69"/>
    </location>
</feature>
<gene>
    <name type="ORF">SPAC2E11.10</name>
    <name type="ORF">SPACUNK4.10</name>
</gene>
<evidence type="ECO:0000250" key="1"/>
<evidence type="ECO:0000305" key="2"/>
<dbReference type="EC" id="1.-.-.-"/>
<dbReference type="EMBL" id="D89185">
    <property type="protein sequence ID" value="BAA13847.1"/>
    <property type="molecule type" value="mRNA"/>
</dbReference>
<dbReference type="EMBL" id="CU329670">
    <property type="protein sequence ID" value="CAA20140.1"/>
    <property type="molecule type" value="Genomic_DNA"/>
</dbReference>
<dbReference type="PIR" id="T41705">
    <property type="entry name" value="T41705"/>
</dbReference>
<dbReference type="PIR" id="T42743">
    <property type="entry name" value="T42743"/>
</dbReference>
<dbReference type="SMR" id="O14075"/>
<dbReference type="BioGRID" id="279048">
    <property type="interactions" value="11"/>
</dbReference>
<dbReference type="FunCoup" id="O14075">
    <property type="interactions" value="423"/>
</dbReference>
<dbReference type="STRING" id="284812.O14075"/>
<dbReference type="iPTMnet" id="O14075"/>
<dbReference type="PaxDb" id="4896-SPACUNK4.10.1"/>
<dbReference type="EnsemblFungi" id="SPACUNK4.10.1">
    <property type="protein sequence ID" value="SPACUNK4.10.1:pep"/>
    <property type="gene ID" value="SPACUNK4.10"/>
</dbReference>
<dbReference type="KEGG" id="spo:2542594"/>
<dbReference type="PomBase" id="SPACUNK4.10"/>
<dbReference type="VEuPathDB" id="FungiDB:SPACUNK4.10"/>
<dbReference type="eggNOG" id="KOG0069">
    <property type="taxonomic scope" value="Eukaryota"/>
</dbReference>
<dbReference type="HOGENOM" id="CLU_019796_1_2_1"/>
<dbReference type="InParanoid" id="O14075"/>
<dbReference type="OMA" id="PHIAWAY"/>
<dbReference type="PhylomeDB" id="O14075"/>
<dbReference type="PRO" id="PR:O14075"/>
<dbReference type="Proteomes" id="UP000002485">
    <property type="component" value="Chromosome I"/>
</dbReference>
<dbReference type="GO" id="GO:0005829">
    <property type="term" value="C:cytosol"/>
    <property type="evidence" value="ECO:0007005"/>
    <property type="project" value="PomBase"/>
</dbReference>
<dbReference type="GO" id="GO:0005634">
    <property type="term" value="C:nucleus"/>
    <property type="evidence" value="ECO:0007005"/>
    <property type="project" value="PomBase"/>
</dbReference>
<dbReference type="GO" id="GO:0030267">
    <property type="term" value="F:glyoxylate reductase (NADPH) activity"/>
    <property type="evidence" value="ECO:0000318"/>
    <property type="project" value="GO_Central"/>
</dbReference>
<dbReference type="GO" id="GO:0016618">
    <property type="term" value="F:hydroxypyruvate reductase [NAD(P)H] activity"/>
    <property type="evidence" value="ECO:0000318"/>
    <property type="project" value="GO_Central"/>
</dbReference>
<dbReference type="GO" id="GO:0051287">
    <property type="term" value="F:NAD binding"/>
    <property type="evidence" value="ECO:0007669"/>
    <property type="project" value="InterPro"/>
</dbReference>
<dbReference type="GO" id="GO:0006091">
    <property type="term" value="P:generation of precursor metabolites and energy"/>
    <property type="evidence" value="ECO:0000305"/>
    <property type="project" value="PomBase"/>
</dbReference>
<dbReference type="GO" id="GO:0009436">
    <property type="term" value="P:glyoxylate catabolic process"/>
    <property type="evidence" value="ECO:0000266"/>
    <property type="project" value="PomBase"/>
</dbReference>
<dbReference type="CDD" id="cd12168">
    <property type="entry name" value="Mand_dh_like"/>
    <property type="match status" value="1"/>
</dbReference>
<dbReference type="FunFam" id="3.40.50.720:FF:000282">
    <property type="entry name" value="Glyoxylate reductase protein"/>
    <property type="match status" value="1"/>
</dbReference>
<dbReference type="Gene3D" id="3.40.50.720">
    <property type="entry name" value="NAD(P)-binding Rossmann-like Domain"/>
    <property type="match status" value="2"/>
</dbReference>
<dbReference type="InterPro" id="IPR050223">
    <property type="entry name" value="D-isomer_2-hydroxyacid_DH"/>
</dbReference>
<dbReference type="InterPro" id="IPR006139">
    <property type="entry name" value="D-isomer_2_OHA_DH_cat_dom"/>
</dbReference>
<dbReference type="InterPro" id="IPR029753">
    <property type="entry name" value="D-isomer_DH_CS"/>
</dbReference>
<dbReference type="InterPro" id="IPR029752">
    <property type="entry name" value="D-isomer_DH_CS1"/>
</dbReference>
<dbReference type="InterPro" id="IPR006140">
    <property type="entry name" value="D-isomer_DH_NAD-bd"/>
</dbReference>
<dbReference type="InterPro" id="IPR036291">
    <property type="entry name" value="NAD(P)-bd_dom_sf"/>
</dbReference>
<dbReference type="PANTHER" id="PTHR10996">
    <property type="entry name" value="2-HYDROXYACID DEHYDROGENASE-RELATED"/>
    <property type="match status" value="1"/>
</dbReference>
<dbReference type="PANTHER" id="PTHR10996:SF257">
    <property type="entry name" value="GLYOXYLATE REDUCTASE 1"/>
    <property type="match status" value="1"/>
</dbReference>
<dbReference type="Pfam" id="PF00389">
    <property type="entry name" value="2-Hacid_dh"/>
    <property type="match status" value="1"/>
</dbReference>
<dbReference type="Pfam" id="PF02826">
    <property type="entry name" value="2-Hacid_dh_C"/>
    <property type="match status" value="1"/>
</dbReference>
<dbReference type="SUPFAM" id="SSF52283">
    <property type="entry name" value="Formate/glycerate dehydrogenase catalytic domain-like"/>
    <property type="match status" value="1"/>
</dbReference>
<dbReference type="SUPFAM" id="SSF51735">
    <property type="entry name" value="NAD(P)-binding Rossmann-fold domains"/>
    <property type="match status" value="1"/>
</dbReference>
<dbReference type="PROSITE" id="PS00065">
    <property type="entry name" value="D_2_HYDROXYACID_DH_1"/>
    <property type="match status" value="1"/>
</dbReference>
<dbReference type="PROSITE" id="PS00670">
    <property type="entry name" value="D_2_HYDROXYACID_DH_2"/>
    <property type="match status" value="1"/>
</dbReference>
<dbReference type="PROSITE" id="PS00671">
    <property type="entry name" value="D_2_HYDROXYACID_DH_3"/>
    <property type="match status" value="1"/>
</dbReference>
<sequence>MTLSGKPAALLVGTLKHAHKEWEALGKYAELKTYSDGTREDFLAKCKTEFQNVKAICRTYNSKFYMGIFDKEIIDNLPPSVKFICHLGAGYETVDVAACTARGIQVSHVPKAVDDATADVGIFLMLGALRGFNQGIFELHKNNWNANCKPSHDPEGKTLGILGLGGIGKTMAKRARAFDMKIVYHNRTPLPEEEAEGAEFVSFDDLLAKSDVLSLNLPLNAHTRHIIGKPEFQKMKRGIVIVNTARGAVMDEAALVEALDEGIVYSAGLDVFEEEPKIHPGLLENEKVILLPHLGTNSLETQYKMECAVLMNVKNGIVNDSLPNLVPEQRGDIE</sequence>
<name>YEAA_SCHPO</name>
<organism>
    <name type="scientific">Schizosaccharomyces pombe (strain 972 / ATCC 24843)</name>
    <name type="common">Fission yeast</name>
    <dbReference type="NCBI Taxonomy" id="284812"/>
    <lineage>
        <taxon>Eukaryota</taxon>
        <taxon>Fungi</taxon>
        <taxon>Dikarya</taxon>
        <taxon>Ascomycota</taxon>
        <taxon>Taphrinomycotina</taxon>
        <taxon>Schizosaccharomycetes</taxon>
        <taxon>Schizosaccharomycetales</taxon>
        <taxon>Schizosaccharomycetaceae</taxon>
        <taxon>Schizosaccharomyces</taxon>
    </lineage>
</organism>
<accession>O14075</accession>
<accession>P78836</accession>
<reference key="1">
    <citation type="journal article" date="1997" name="DNA Res.">
        <title>Identification of open reading frames in Schizosaccharomyces pombe cDNAs.</title>
        <authorList>
            <person name="Yoshioka S."/>
            <person name="Kato K."/>
            <person name="Nakai K."/>
            <person name="Okayama H."/>
            <person name="Nojima H."/>
        </authorList>
    </citation>
    <scope>NUCLEOTIDE SEQUENCE [LARGE SCALE MRNA]</scope>
    <source>
        <strain>PR745</strain>
    </source>
</reference>
<reference key="2">
    <citation type="journal article" date="2002" name="Nature">
        <title>The genome sequence of Schizosaccharomyces pombe.</title>
        <authorList>
            <person name="Wood V."/>
            <person name="Gwilliam R."/>
            <person name="Rajandream M.A."/>
            <person name="Lyne M.H."/>
            <person name="Lyne R."/>
            <person name="Stewart A."/>
            <person name="Sgouros J.G."/>
            <person name="Peat N."/>
            <person name="Hayles J."/>
            <person name="Baker S.G."/>
            <person name="Basham D."/>
            <person name="Bowman S."/>
            <person name="Brooks K."/>
            <person name="Brown D."/>
            <person name="Brown S."/>
            <person name="Chillingworth T."/>
            <person name="Churcher C.M."/>
            <person name="Collins M."/>
            <person name="Connor R."/>
            <person name="Cronin A."/>
            <person name="Davis P."/>
            <person name="Feltwell T."/>
            <person name="Fraser A."/>
            <person name="Gentles S."/>
            <person name="Goble A."/>
            <person name="Hamlin N."/>
            <person name="Harris D.E."/>
            <person name="Hidalgo J."/>
            <person name="Hodgson G."/>
            <person name="Holroyd S."/>
            <person name="Hornsby T."/>
            <person name="Howarth S."/>
            <person name="Huckle E.J."/>
            <person name="Hunt S."/>
            <person name="Jagels K."/>
            <person name="James K.D."/>
            <person name="Jones L."/>
            <person name="Jones M."/>
            <person name="Leather S."/>
            <person name="McDonald S."/>
            <person name="McLean J."/>
            <person name="Mooney P."/>
            <person name="Moule S."/>
            <person name="Mungall K.L."/>
            <person name="Murphy L.D."/>
            <person name="Niblett D."/>
            <person name="Odell C."/>
            <person name="Oliver K."/>
            <person name="O'Neil S."/>
            <person name="Pearson D."/>
            <person name="Quail M.A."/>
            <person name="Rabbinowitsch E."/>
            <person name="Rutherford K.M."/>
            <person name="Rutter S."/>
            <person name="Saunders D."/>
            <person name="Seeger K."/>
            <person name="Sharp S."/>
            <person name="Skelton J."/>
            <person name="Simmonds M.N."/>
            <person name="Squares R."/>
            <person name="Squares S."/>
            <person name="Stevens K."/>
            <person name="Taylor K."/>
            <person name="Taylor R.G."/>
            <person name="Tivey A."/>
            <person name="Walsh S.V."/>
            <person name="Warren T."/>
            <person name="Whitehead S."/>
            <person name="Woodward J.R."/>
            <person name="Volckaert G."/>
            <person name="Aert R."/>
            <person name="Robben J."/>
            <person name="Grymonprez B."/>
            <person name="Weltjens I."/>
            <person name="Vanstreels E."/>
            <person name="Rieger M."/>
            <person name="Schaefer M."/>
            <person name="Mueller-Auer S."/>
            <person name="Gabel C."/>
            <person name="Fuchs M."/>
            <person name="Duesterhoeft A."/>
            <person name="Fritzc C."/>
            <person name="Holzer E."/>
            <person name="Moestl D."/>
            <person name="Hilbert H."/>
            <person name="Borzym K."/>
            <person name="Langer I."/>
            <person name="Beck A."/>
            <person name="Lehrach H."/>
            <person name="Reinhardt R."/>
            <person name="Pohl T.M."/>
            <person name="Eger P."/>
            <person name="Zimmermann W."/>
            <person name="Wedler H."/>
            <person name="Wambutt R."/>
            <person name="Purnelle B."/>
            <person name="Goffeau A."/>
            <person name="Cadieu E."/>
            <person name="Dreano S."/>
            <person name="Gloux S."/>
            <person name="Lelaure V."/>
            <person name="Mottier S."/>
            <person name="Galibert F."/>
            <person name="Aves S.J."/>
            <person name="Xiang Z."/>
            <person name="Hunt C."/>
            <person name="Moore K."/>
            <person name="Hurst S.M."/>
            <person name="Lucas M."/>
            <person name="Rochet M."/>
            <person name="Gaillardin C."/>
            <person name="Tallada V.A."/>
            <person name="Garzon A."/>
            <person name="Thode G."/>
            <person name="Daga R.R."/>
            <person name="Cruzado L."/>
            <person name="Jimenez J."/>
            <person name="Sanchez M."/>
            <person name="del Rey F."/>
            <person name="Benito J."/>
            <person name="Dominguez A."/>
            <person name="Revuelta J.L."/>
            <person name="Moreno S."/>
            <person name="Armstrong J."/>
            <person name="Forsburg S.L."/>
            <person name="Cerutti L."/>
            <person name="Lowe T."/>
            <person name="McCombie W.R."/>
            <person name="Paulsen I."/>
            <person name="Potashkin J."/>
            <person name="Shpakovski G.V."/>
            <person name="Ussery D."/>
            <person name="Barrell B.G."/>
            <person name="Nurse P."/>
        </authorList>
    </citation>
    <scope>NUCLEOTIDE SEQUENCE [LARGE SCALE GENOMIC DNA]</scope>
    <source>
        <strain>972 / ATCC 24843</strain>
    </source>
</reference>